<reference key="1">
    <citation type="journal article" date="2012" name="Med. Chem. Commun.">
        <title>Comparative analysis of the biosynthetic systems for fungal bicyclo[2.2.2]diazaoctane indole alkaloids: the (+)/(-)-notoamide, paraherquamide and malbrancheamide pathways.</title>
        <authorList>
            <person name="Li S."/>
            <person name="Anand K."/>
            <person name="Tran H."/>
            <person name="Yu F."/>
            <person name="Finefield J.M."/>
            <person name="Sunderhaus J.D."/>
            <person name="McAfoos T.J."/>
            <person name="Tsukamoto S."/>
            <person name="Williams R.M."/>
            <person name="Sherman D.H."/>
        </authorList>
    </citation>
    <scope>NUCLEOTIDE SEQUENCE [GENOMIC DNA]</scope>
    <scope>FUNCTION</scope>
    <source>
        <strain>RRC1813</strain>
    </source>
</reference>
<reference key="2">
    <citation type="journal article" date="2008" name="Bioorg. Med. Chem. Lett.">
        <title>Calmodulin inhibitory activity of the malbrancheamides and various analogs.</title>
        <authorList>
            <person name="Miller K.A."/>
            <person name="Figueroa M."/>
            <person name="Valente M.W."/>
            <person name="Greshock T.J."/>
            <person name="Mata R."/>
            <person name="Williams R.M."/>
        </authorList>
    </citation>
    <scope>BIOTECHNOLOGY</scope>
</reference>
<reference key="3">
    <citation type="journal article" date="2009" name="Anal. Biochem.">
        <title>An alternative assay to discover potential calmodulin inhibitors using a human fluorophore-labeled CaM protein.</title>
        <authorList>
            <person name="Gonzalez-Andrade M."/>
            <person name="Figueroa M."/>
            <person name="Rodriguez-Sotres R."/>
            <person name="Mata R."/>
            <person name="Sosa-Peinado A."/>
        </authorList>
    </citation>
    <scope>BIOTECHNOLOGY</scope>
</reference>
<reference key="4">
    <citation type="journal article" date="2011" name="J. Enzym. Inhib. Med. Chem.">
        <title>Fluorescence, circular dichroism, NMR, and docking studies of the interaction of the alkaloid malbrancheamide with calmodulin.</title>
        <authorList>
            <person name="Figueroa M."/>
            <person name="Gonzalez-Andrade M."/>
            <person name="Sosa-Peinado A."/>
            <person name="Madariaga-Mazon A."/>
            <person name="Del Rio-Portilla F."/>
            <person name="Gonzalez M.C."/>
            <person name="Mata R."/>
        </authorList>
    </citation>
    <scope>BIOTECHNOLOGY</scope>
</reference>
<reference key="5">
    <citation type="journal article" date="2015" name="J. Pharm. Pharmacol.">
        <title>Insights on the vasorelaxant mode of action of malbrancheamide.</title>
        <authorList>
            <person name="Madariaga-Mazon A."/>
            <person name="Hernandez-Abreu O."/>
            <person name="Estrada-Soto S."/>
            <person name="Mata R."/>
        </authorList>
    </citation>
    <scope>BIOTECHNOLOGY</scope>
</reference>
<reference key="6">
    <citation type="journal article" date="2017" name="J. Am. Chem. Soc.">
        <title>Function and structure of MalA/MalA', iterative halogenases for late-stage C-H functionalization of indole alkaloids.</title>
        <authorList>
            <person name="Fraley A.E."/>
            <person name="Garcia-Borras M."/>
            <person name="Tripathi A."/>
            <person name="Khare D."/>
            <person name="Mercado-Marin E.V."/>
            <person name="Tran H."/>
            <person name="Dan Q."/>
            <person name="Webb G.P."/>
            <person name="Watts K.R."/>
            <person name="Crews P."/>
            <person name="Sarpong R."/>
            <person name="Williams R.M."/>
            <person name="Smith J.L."/>
            <person name="Houk K.N."/>
            <person name="Sherman D.H."/>
        </authorList>
    </citation>
    <scope>FUNCTION</scope>
</reference>
<reference key="7">
    <citation type="journal article" date="2019" name="Nat. Chem.">
        <title>Fungal indole alkaloid biogenesis through evolution of a bifunctional reductase/Diels-Alderase.</title>
        <authorList>
            <person name="Dan Q."/>
            <person name="Newmister S.A."/>
            <person name="Klas K.R."/>
            <person name="Fraley A.E."/>
            <person name="McAfoos T.J."/>
            <person name="Somoza A.D."/>
            <person name="Sunderhaus J.D."/>
            <person name="Ye Y."/>
            <person name="Shende V.V."/>
            <person name="Yu F."/>
            <person name="Sanders J.N."/>
            <person name="Brown W.C."/>
            <person name="Zhao L."/>
            <person name="Paton R.S."/>
            <person name="Houk K.N."/>
            <person name="Smith J.L."/>
            <person name="Sherman D.H."/>
            <person name="Williams R.M."/>
        </authorList>
    </citation>
    <scope>FUNCTION</scope>
</reference>
<keyword id="KW-0521">NADP</keyword>
<keyword id="KW-0560">Oxidoreductase</keyword>
<protein>
    <recommendedName>
        <fullName evidence="9">NmrA-like family domain-containing oxidoreductase malD</fullName>
        <ecNumber evidence="10">1.-.-.-</ecNumber>
    </recommendedName>
    <alternativeName>
        <fullName evidence="9">Malbrancheamide biosynthesis cluster protein D</fullName>
    </alternativeName>
</protein>
<sequence length="336" mass="37569">MDTGKRLVTVFGGTGNQGSSVVRSLLAHKDKLFHVRVITRDPTSEKAQACAKLGAELVKADGFNKSETVSAFMGSWGAFVNTNSDEEIYKIPGGRSDYDLGSTVLDATKEAGVKHVVYSSGLNLCKYTNGRVHSEGFESKYYVEQYGRRKGFQTFTPIVPASFMEAFLAESFCQSLGGFPWFKRDTGEYLLATPPYGGDERMPWVSVEDDFGDIVHGIFLDPDSYHLKTIQGSSELISFEKMVEDFMEVTGEKARYVRLKSWVDIPLDGTSCREEMRAIFHSMYSNGGKWFVPDESEIDTATTLKKEAKLAQGVTDGSLTAFKDWIHKQWERRLPN</sequence>
<name>MALD_MALAU</name>
<comment type="function">
    <text evidence="5 7 8">NmrA-like family domain-containing oxidoreductase; part of the gene cluster that mediates the biosynthesis of malbrancheamide, a dichlorinated fungal indole alkaloid that belongs to a family of natural products containing a characteristic bicyclo[2.2.2]diazaoctane core (PubMed:23213353, PubMed:28777910, PubMed:31548667). The first step of malbrancheamide biosynthesis involves coupling of L-proline and L-tryptophan by malG, a bimodular NRPS, to produce L-Pro-L-Trp aldehyde through reductive offloading (PubMed:23213353, PubMed:31548667). This compound undergoes spontaneous cyclization and dehydration to give a dienamine which is reverse prenylated at C-2 by malE (PubMed:31548667). The other prenyltransferase present in the cluster, malB, displays modest activity, suggesting that may be a redundant gene in the pathway (PubMed:31548667). Subsequently, a [4+2] Diels-Alder cyclo-addition catalyzed by the bifunctional enzyme malC forms the characteristic bicyclo[2.2.2]diazaoctane ring of premalbrancheamid (PubMed:31548667). Finally, the flavin-dependent halogenase malA catalyzes the iterative dichlorination of the indole ring of premalbrancheamide to yield C-9 monochlorinated malbrancheamide B, C-8 monochlorinated isomalbrancheamide B, and dichlorinated malbrancheamide (PubMed:28777910, PubMed:31548667). MalA is also able to brominate premalbrancheamide at C-9 to yield malbrancheamide C, and, to a lesser extend, at C-8 to yield isomalbrancheamide C (PubMed:28777910). Finally, malA can brominate C-9 monochlorinated malbrancheamide B at C-8 to yield malbrancheamide D, or C-8 monochlorinated isomalbrancheamide B at C-9 to produce isomalbrancheamide D (PubMed:28777910).</text>
</comment>
<comment type="biotechnology">
    <text evidence="2 3 4 6">Malbrancheamides have the ability to inhibit calmodulin, calmodulin-dependent phosphodiesterase (PDE1), and induce both endothelium-independent and endothelium-dependent relaxant effects, suggesting their potential as vasorelaxant agents.</text>
</comment>
<comment type="similarity">
    <text evidence="10">Belongs to the NmrA-type oxidoreductase family.</text>
</comment>
<organism>
    <name type="scientific">Malbranchea aurantiaca</name>
    <dbReference type="NCBI Taxonomy" id="78605"/>
    <lineage>
        <taxon>Eukaryota</taxon>
        <taxon>Fungi</taxon>
        <taxon>Dikarya</taxon>
        <taxon>Ascomycota</taxon>
        <taxon>Pezizomycotina</taxon>
        <taxon>Eurotiomycetes</taxon>
        <taxon>Eurotiomycetidae</taxon>
        <taxon>Onygenales</taxon>
        <taxon>Malbrancheaceae</taxon>
        <taxon>Malbranchea</taxon>
    </lineage>
</organism>
<proteinExistence type="evidence at protein level"/>
<dbReference type="EC" id="1.-.-.-" evidence="10"/>
<dbReference type="EMBL" id="JQ708193">
    <property type="protein sequence ID" value="AGA37264.1"/>
    <property type="molecule type" value="Genomic_DNA"/>
</dbReference>
<dbReference type="SMR" id="L0E2T7"/>
<dbReference type="GO" id="GO:0005634">
    <property type="term" value="C:nucleus"/>
    <property type="evidence" value="ECO:0007669"/>
    <property type="project" value="TreeGrafter"/>
</dbReference>
<dbReference type="GO" id="GO:0016491">
    <property type="term" value="F:oxidoreductase activity"/>
    <property type="evidence" value="ECO:0007669"/>
    <property type="project" value="UniProtKB-KW"/>
</dbReference>
<dbReference type="CDD" id="cd05251">
    <property type="entry name" value="NmrA_like_SDR_a"/>
    <property type="match status" value="1"/>
</dbReference>
<dbReference type="Gene3D" id="3.40.50.720">
    <property type="entry name" value="NAD(P)-binding Rossmann-like Domain"/>
    <property type="match status" value="1"/>
</dbReference>
<dbReference type="Gene3D" id="3.90.25.10">
    <property type="entry name" value="UDP-galactose 4-epimerase, domain 1"/>
    <property type="match status" value="1"/>
</dbReference>
<dbReference type="InterPro" id="IPR036291">
    <property type="entry name" value="NAD(P)-bd_dom_sf"/>
</dbReference>
<dbReference type="InterPro" id="IPR008030">
    <property type="entry name" value="NmrA-like"/>
</dbReference>
<dbReference type="InterPro" id="IPR051164">
    <property type="entry name" value="NmrA-like_oxidored"/>
</dbReference>
<dbReference type="PANTHER" id="PTHR42748">
    <property type="entry name" value="NITROGEN METABOLITE REPRESSION PROTEIN NMRA FAMILY MEMBER"/>
    <property type="match status" value="1"/>
</dbReference>
<dbReference type="PANTHER" id="PTHR42748:SF30">
    <property type="entry name" value="NMRA-LIKE DOMAIN-CONTAINING PROTEIN"/>
    <property type="match status" value="1"/>
</dbReference>
<dbReference type="Pfam" id="PF05368">
    <property type="entry name" value="NmrA"/>
    <property type="match status" value="1"/>
</dbReference>
<dbReference type="SUPFAM" id="SSF51735">
    <property type="entry name" value="NAD(P)-binding Rossmann-fold domains"/>
    <property type="match status" value="1"/>
</dbReference>
<evidence type="ECO:0000250" key="1">
    <source>
        <dbReference type="UniProtKB" id="Q9HBL8"/>
    </source>
</evidence>
<evidence type="ECO:0000269" key="2">
    <source>
    </source>
</evidence>
<evidence type="ECO:0000269" key="3">
    <source>
    </source>
</evidence>
<evidence type="ECO:0000269" key="4">
    <source>
    </source>
</evidence>
<evidence type="ECO:0000269" key="5">
    <source>
    </source>
</evidence>
<evidence type="ECO:0000269" key="6">
    <source>
    </source>
</evidence>
<evidence type="ECO:0000269" key="7">
    <source>
    </source>
</evidence>
<evidence type="ECO:0000269" key="8">
    <source>
    </source>
</evidence>
<evidence type="ECO:0000303" key="9">
    <source>
    </source>
</evidence>
<evidence type="ECO:0000305" key="10"/>
<accession>L0E2T7</accession>
<feature type="chain" id="PRO_0000448777" description="NmrA-like family domain-containing oxidoreductase malD">
    <location>
        <begin position="1"/>
        <end position="336"/>
    </location>
</feature>
<feature type="binding site" evidence="1">
    <location>
        <begin position="12"/>
        <end position="17"/>
    </location>
    <ligand>
        <name>NADP(+)</name>
        <dbReference type="ChEBI" id="CHEBI:58349"/>
    </ligand>
</feature>
<feature type="binding site" evidence="1">
    <location>
        <begin position="40"/>
        <end position="44"/>
    </location>
    <ligand>
        <name>NADP(+)</name>
        <dbReference type="ChEBI" id="CHEBI:58349"/>
    </ligand>
</feature>
<feature type="binding site" evidence="1">
    <location>
        <begin position="61"/>
        <end position="62"/>
    </location>
    <ligand>
        <name>NADP(+)</name>
        <dbReference type="ChEBI" id="CHEBI:58349"/>
    </ligand>
</feature>
<feature type="binding site" evidence="1">
    <location>
        <begin position="82"/>
        <end position="84"/>
    </location>
    <ligand>
        <name>NADP(+)</name>
        <dbReference type="ChEBI" id="CHEBI:58349"/>
    </ligand>
</feature>
<feature type="binding site" evidence="1">
    <location>
        <position position="140"/>
    </location>
    <ligand>
        <name>NADP(+)</name>
        <dbReference type="ChEBI" id="CHEBI:58349"/>
    </ligand>
</feature>
<feature type="binding site" evidence="1">
    <location>
        <begin position="163"/>
        <end position="166"/>
    </location>
    <ligand>
        <name>NADP(+)</name>
        <dbReference type="ChEBI" id="CHEBI:58349"/>
    </ligand>
</feature>
<gene>
    <name evidence="9" type="primary">malD</name>
</gene>